<gene>
    <name evidence="1" type="primary">lpxD</name>
    <name type="ordered locus">GM21_3419</name>
</gene>
<accession>C6E5B9</accession>
<sequence length="345" mass="35691">MKKTLREIAEYLGGTVSGDGEVLIGGLATLDDAGEGTLTFLANPKYAAKVATTKASAVLMGTGGNTHGKNAIFHPNPYLAFAKLLTLFYTAPAKPVGVLPGAFVADGVKLGADVSVYPGASIGAGAVIGDRVVLHPGVVLYPGVVVGNDVTLHANVSVRERCRIGNRVTIHDGTVIGSDGFGYAPDGASYYKIPQIGIVIIEDDVEIGSNCVIDRAALEATRIRRGTKIDNLVQIAHNVVIGEDCIIVSQVGISGSTQLGNHVTLGGQVGVAGHIKIGDNVMIGAKSGVAGNVEPNQVLSGIPVMPHRDWLRSAGIAPKLPEMKKTLSALEKRVAELEAKLAKGE</sequence>
<feature type="chain" id="PRO_1000211747" description="UDP-3-O-acylglucosamine N-acyltransferase">
    <location>
        <begin position="1"/>
        <end position="345"/>
    </location>
</feature>
<feature type="active site" description="Proton acceptor" evidence="1">
    <location>
        <position position="237"/>
    </location>
</feature>
<name>LPXD_GEOSM</name>
<comment type="function">
    <text evidence="1">Catalyzes the N-acylation of UDP-3-O-acylglucosamine using 3-hydroxyacyl-ACP as the acyl donor. Is involved in the biosynthesis of lipid A, a phosphorylated glycolipid that anchors the lipopolysaccharide to the outer membrane of the cell.</text>
</comment>
<comment type="catalytic activity">
    <reaction evidence="1">
        <text>a UDP-3-O-[(3R)-3-hydroxyacyl]-alpha-D-glucosamine + a (3R)-hydroxyacyl-[ACP] = a UDP-2-N,3-O-bis[(3R)-3-hydroxyacyl]-alpha-D-glucosamine + holo-[ACP] + H(+)</text>
        <dbReference type="Rhea" id="RHEA:53836"/>
        <dbReference type="Rhea" id="RHEA-COMP:9685"/>
        <dbReference type="Rhea" id="RHEA-COMP:9945"/>
        <dbReference type="ChEBI" id="CHEBI:15378"/>
        <dbReference type="ChEBI" id="CHEBI:64479"/>
        <dbReference type="ChEBI" id="CHEBI:78827"/>
        <dbReference type="ChEBI" id="CHEBI:137740"/>
        <dbReference type="ChEBI" id="CHEBI:137748"/>
        <dbReference type="EC" id="2.3.1.191"/>
    </reaction>
</comment>
<comment type="pathway">
    <text evidence="1">Bacterial outer membrane biogenesis; LPS lipid A biosynthesis.</text>
</comment>
<comment type="subunit">
    <text evidence="1">Homotrimer.</text>
</comment>
<comment type="similarity">
    <text evidence="1">Belongs to the transferase hexapeptide repeat family. LpxD subfamily.</text>
</comment>
<keyword id="KW-0012">Acyltransferase</keyword>
<keyword id="KW-0441">Lipid A biosynthesis</keyword>
<keyword id="KW-0444">Lipid biosynthesis</keyword>
<keyword id="KW-0443">Lipid metabolism</keyword>
<keyword id="KW-0677">Repeat</keyword>
<keyword id="KW-0808">Transferase</keyword>
<organism>
    <name type="scientific">Geobacter sp. (strain M21)</name>
    <dbReference type="NCBI Taxonomy" id="443144"/>
    <lineage>
        <taxon>Bacteria</taxon>
        <taxon>Pseudomonadati</taxon>
        <taxon>Thermodesulfobacteriota</taxon>
        <taxon>Desulfuromonadia</taxon>
        <taxon>Geobacterales</taxon>
        <taxon>Geobacteraceae</taxon>
        <taxon>Geobacter</taxon>
    </lineage>
</organism>
<dbReference type="EC" id="2.3.1.191" evidence="1"/>
<dbReference type="EMBL" id="CP001661">
    <property type="protein sequence ID" value="ACT19443.1"/>
    <property type="molecule type" value="Genomic_DNA"/>
</dbReference>
<dbReference type="SMR" id="C6E5B9"/>
<dbReference type="STRING" id="443144.GM21_3419"/>
<dbReference type="KEGG" id="gem:GM21_3419"/>
<dbReference type="eggNOG" id="COG1044">
    <property type="taxonomic scope" value="Bacteria"/>
</dbReference>
<dbReference type="HOGENOM" id="CLU_049865_0_0_7"/>
<dbReference type="OrthoDB" id="9784739at2"/>
<dbReference type="UniPathway" id="UPA00973"/>
<dbReference type="GO" id="GO:0016020">
    <property type="term" value="C:membrane"/>
    <property type="evidence" value="ECO:0007669"/>
    <property type="project" value="GOC"/>
</dbReference>
<dbReference type="GO" id="GO:0016410">
    <property type="term" value="F:N-acyltransferase activity"/>
    <property type="evidence" value="ECO:0007669"/>
    <property type="project" value="InterPro"/>
</dbReference>
<dbReference type="GO" id="GO:0009245">
    <property type="term" value="P:lipid A biosynthetic process"/>
    <property type="evidence" value="ECO:0007669"/>
    <property type="project" value="UniProtKB-UniRule"/>
</dbReference>
<dbReference type="CDD" id="cd03352">
    <property type="entry name" value="LbH_LpxD"/>
    <property type="match status" value="1"/>
</dbReference>
<dbReference type="Gene3D" id="2.160.10.10">
    <property type="entry name" value="Hexapeptide repeat proteins"/>
    <property type="match status" value="1"/>
</dbReference>
<dbReference type="Gene3D" id="3.40.1390.10">
    <property type="entry name" value="MurE/MurF, N-terminal domain"/>
    <property type="match status" value="1"/>
</dbReference>
<dbReference type="HAMAP" id="MF_00523">
    <property type="entry name" value="LpxD"/>
    <property type="match status" value="1"/>
</dbReference>
<dbReference type="InterPro" id="IPR001451">
    <property type="entry name" value="Hexapep"/>
</dbReference>
<dbReference type="InterPro" id="IPR018357">
    <property type="entry name" value="Hexapep_transf_CS"/>
</dbReference>
<dbReference type="InterPro" id="IPR007691">
    <property type="entry name" value="LpxD"/>
</dbReference>
<dbReference type="InterPro" id="IPR011004">
    <property type="entry name" value="Trimer_LpxA-like_sf"/>
</dbReference>
<dbReference type="InterPro" id="IPR020573">
    <property type="entry name" value="UDP_GlcNAc_AcTrfase_non-rep"/>
</dbReference>
<dbReference type="NCBIfam" id="TIGR01853">
    <property type="entry name" value="lipid_A_lpxD"/>
    <property type="match status" value="1"/>
</dbReference>
<dbReference type="NCBIfam" id="NF002060">
    <property type="entry name" value="PRK00892.1"/>
    <property type="match status" value="1"/>
</dbReference>
<dbReference type="PANTHER" id="PTHR43378">
    <property type="entry name" value="UDP-3-O-ACYLGLUCOSAMINE N-ACYLTRANSFERASE"/>
    <property type="match status" value="1"/>
</dbReference>
<dbReference type="PANTHER" id="PTHR43378:SF2">
    <property type="entry name" value="UDP-3-O-ACYLGLUCOSAMINE N-ACYLTRANSFERASE 1, MITOCHONDRIAL-RELATED"/>
    <property type="match status" value="1"/>
</dbReference>
<dbReference type="Pfam" id="PF00132">
    <property type="entry name" value="Hexapep"/>
    <property type="match status" value="3"/>
</dbReference>
<dbReference type="Pfam" id="PF14602">
    <property type="entry name" value="Hexapep_2"/>
    <property type="match status" value="1"/>
</dbReference>
<dbReference type="Pfam" id="PF04613">
    <property type="entry name" value="LpxD"/>
    <property type="match status" value="1"/>
</dbReference>
<dbReference type="SUPFAM" id="SSF51161">
    <property type="entry name" value="Trimeric LpxA-like enzymes"/>
    <property type="match status" value="1"/>
</dbReference>
<dbReference type="PROSITE" id="PS00101">
    <property type="entry name" value="HEXAPEP_TRANSFERASES"/>
    <property type="match status" value="2"/>
</dbReference>
<proteinExistence type="inferred from homology"/>
<evidence type="ECO:0000255" key="1">
    <source>
        <dbReference type="HAMAP-Rule" id="MF_00523"/>
    </source>
</evidence>
<protein>
    <recommendedName>
        <fullName evidence="1">UDP-3-O-acylglucosamine N-acyltransferase</fullName>
        <ecNumber evidence="1">2.3.1.191</ecNumber>
    </recommendedName>
</protein>
<reference key="1">
    <citation type="submission" date="2009-07" db="EMBL/GenBank/DDBJ databases">
        <title>Complete sequence of Geobacter sp. M21.</title>
        <authorList>
            <consortium name="US DOE Joint Genome Institute"/>
            <person name="Lucas S."/>
            <person name="Copeland A."/>
            <person name="Lapidus A."/>
            <person name="Glavina del Rio T."/>
            <person name="Dalin E."/>
            <person name="Tice H."/>
            <person name="Bruce D."/>
            <person name="Goodwin L."/>
            <person name="Pitluck S."/>
            <person name="Saunders E."/>
            <person name="Brettin T."/>
            <person name="Detter J.C."/>
            <person name="Han C."/>
            <person name="Larimer F."/>
            <person name="Land M."/>
            <person name="Hauser L."/>
            <person name="Kyrpides N."/>
            <person name="Ovchinnikova G."/>
            <person name="Lovley D."/>
        </authorList>
    </citation>
    <scope>NUCLEOTIDE SEQUENCE [LARGE SCALE GENOMIC DNA]</scope>
    <source>
        <strain>M21</strain>
    </source>
</reference>